<name>YR160_MIMIV</name>
<protein>
    <recommendedName>
        <fullName>Uncharacterized protein R160</fullName>
    </recommendedName>
</protein>
<evidence type="ECO:0000269" key="1">
    <source>
    </source>
</evidence>
<evidence type="ECO:0000305" key="2"/>
<organism>
    <name type="scientific">Acanthamoeba polyphaga mimivirus</name>
    <name type="common">APMV</name>
    <dbReference type="NCBI Taxonomy" id="212035"/>
    <lineage>
        <taxon>Viruses</taxon>
        <taxon>Varidnaviria</taxon>
        <taxon>Bamfordvirae</taxon>
        <taxon>Nucleocytoviricota</taxon>
        <taxon>Megaviricetes</taxon>
        <taxon>Imitervirales</taxon>
        <taxon>Mimiviridae</taxon>
        <taxon>Megamimivirinae</taxon>
        <taxon>Mimivirus</taxon>
        <taxon>Mimivirus bradfordmassiliense</taxon>
    </lineage>
</organism>
<organismHost>
    <name type="scientific">Acanthamoeba polyphaga</name>
    <name type="common">Amoeba</name>
    <dbReference type="NCBI Taxonomy" id="5757"/>
</organismHost>
<gene>
    <name type="ordered locus">MIMI_R160</name>
</gene>
<accession>Q5UPM2</accession>
<dbReference type="EMBL" id="AY653733">
    <property type="protein sequence ID" value="AAV50435.1"/>
    <property type="molecule type" value="Genomic_DNA"/>
</dbReference>
<dbReference type="SMR" id="Q5UPM2"/>
<dbReference type="KEGG" id="vg:9924760"/>
<dbReference type="Proteomes" id="UP000001134">
    <property type="component" value="Genome"/>
</dbReference>
<dbReference type="GO" id="GO:0044423">
    <property type="term" value="C:virion component"/>
    <property type="evidence" value="ECO:0007669"/>
    <property type="project" value="UniProtKB-KW"/>
</dbReference>
<dbReference type="InterPro" id="IPR043885">
    <property type="entry name" value="DUF5847"/>
</dbReference>
<dbReference type="Pfam" id="PF19165">
    <property type="entry name" value="DUF5847"/>
    <property type="match status" value="1"/>
</dbReference>
<feature type="chain" id="PRO_0000071223" description="Uncharacterized protein R160">
    <location>
        <begin position="1"/>
        <end position="433"/>
    </location>
</feature>
<sequence>MSISKTLDKNIKQVNGPINVVRLQGKIGSVNKVVYLFMDRHLAVEYQTECDNIFAKDVHMFFADSFKNIGSTGKTYDFFLEKDAEEITPKIPEELNTSKTKYISEVGKMFKKIFKYDPKANRALTSDIFQNTRFHYIDFRGYLYMDIFEPIDMANYVMENIWNKRDLKSEDLNRIAGQLNIVSQQCQLILQIMDSYSNNKNRDKNNSERQYGVRKITPLKYTTVSESYQKTYKQQKQIQIDYIRYFINKIYTKYNDNTIKSKLINRLEYFKNGIRNLNTEVNNIIVDINNIMTEMTSSSGKLVQYNEKWYYGMPYEKEIMYIADLYNKLRNLNGDSVSYIARLIDIYFLRRFLDKDYITNAILYSGANHSLTDIDILVKDFDFKITHVAYSKYPINQITNSVKKAEFGMVNIQPLFDNNEQCSDVTYFPDNFL</sequence>
<proteinExistence type="evidence at protein level"/>
<reference key="1">
    <citation type="journal article" date="2004" name="Science">
        <title>The 1.2-megabase genome sequence of Mimivirus.</title>
        <authorList>
            <person name="Raoult D."/>
            <person name="Audic S."/>
            <person name="Robert C."/>
            <person name="Abergel C."/>
            <person name="Renesto P."/>
            <person name="Ogata H."/>
            <person name="La Scola B."/>
            <person name="Susan M."/>
            <person name="Claverie J.-M."/>
        </authorList>
    </citation>
    <scope>NUCLEOTIDE SEQUENCE [LARGE SCALE GENOMIC DNA]</scope>
    <source>
        <strain>Rowbotham-Bradford</strain>
    </source>
</reference>
<reference key="2">
    <citation type="journal article" date="2006" name="J. Virol.">
        <title>Mimivirus giant particles incorporate a large fraction of anonymous and unique gene products.</title>
        <authorList>
            <person name="Renesto P."/>
            <person name="Abergel C."/>
            <person name="Decloquement P."/>
            <person name="Moinier D."/>
            <person name="Azza S."/>
            <person name="Ogata H."/>
            <person name="Fourquet P."/>
            <person name="Gorvel J.-P."/>
            <person name="Claverie J.-M."/>
            <person name="Raoult D."/>
        </authorList>
    </citation>
    <scope>IDENTIFICATION BY MASS SPECTROMETRY [LARGE SCALE ANALYSIS]</scope>
    <scope>SUBCELLULAR LOCATION</scope>
</reference>
<comment type="subcellular location">
    <subcellularLocation>
        <location evidence="1">Virion</location>
    </subcellularLocation>
</comment>
<comment type="similarity">
    <text evidence="2">Belongs to the mimivirus R160 family.</text>
</comment>
<keyword id="KW-1185">Reference proteome</keyword>
<keyword id="KW-0946">Virion</keyword>